<reference key="1">
    <citation type="journal article" date="2002" name="Proc. Natl. Acad. Sci. U.S.A.">
        <title>Extensive mosaic structure revealed by the complete genome sequence of uropathogenic Escherichia coli.</title>
        <authorList>
            <person name="Welch R.A."/>
            <person name="Burland V."/>
            <person name="Plunkett G. III"/>
            <person name="Redford P."/>
            <person name="Roesch P."/>
            <person name="Rasko D."/>
            <person name="Buckles E.L."/>
            <person name="Liou S.-R."/>
            <person name="Boutin A."/>
            <person name="Hackett J."/>
            <person name="Stroud D."/>
            <person name="Mayhew G.F."/>
            <person name="Rose D.J."/>
            <person name="Zhou S."/>
            <person name="Schwartz D.C."/>
            <person name="Perna N.T."/>
            <person name="Mobley H.L.T."/>
            <person name="Donnenberg M.S."/>
            <person name="Blattner F.R."/>
        </authorList>
    </citation>
    <scope>NUCLEOTIDE SEQUENCE [LARGE SCALE GENOMIC DNA]</scope>
    <source>
        <strain>CFT073 / ATCC 700928 / UPEC</strain>
    </source>
</reference>
<sequence length="151" mass="16156">MKKIDVKILDPRVGKEFPLPTYATSGSAGLDLRACLDDAVELAPGDTTLVPTGLAIHIADPSLAAMMLPRSGLGHKHGIVLGNLVGLIDSDYQGQLMISVWNRGQDSFTIQPGERIAQMIFVPVVQAEFNLVEDFDATDRGEGGFGHSGRQ</sequence>
<accession>P64006</accession>
<accession>Q8XDA1</accession>
<proteinExistence type="inferred from homology"/>
<feature type="chain" id="PRO_0000182859" description="Deoxyuridine 5'-triphosphate nucleotidohydrolase">
    <location>
        <begin position="1"/>
        <end position="151"/>
    </location>
</feature>
<feature type="binding site" evidence="1">
    <location>
        <begin position="70"/>
        <end position="72"/>
    </location>
    <ligand>
        <name>substrate</name>
    </ligand>
</feature>
<feature type="binding site" evidence="1">
    <location>
        <position position="83"/>
    </location>
    <ligand>
        <name>substrate</name>
    </ligand>
</feature>
<feature type="binding site" evidence="1">
    <location>
        <begin position="87"/>
        <end position="89"/>
    </location>
    <ligand>
        <name>substrate</name>
    </ligand>
</feature>
<feature type="binding site" evidence="1">
    <location>
        <position position="97"/>
    </location>
    <ligand>
        <name>substrate</name>
    </ligand>
</feature>
<dbReference type="EC" id="3.6.1.23" evidence="1"/>
<dbReference type="EMBL" id="AE014075">
    <property type="protein sequence ID" value="AAN82900.1"/>
    <property type="status" value="ALT_INIT"/>
    <property type="molecule type" value="Genomic_DNA"/>
</dbReference>
<dbReference type="SMR" id="P64006"/>
<dbReference type="STRING" id="199310.c4464"/>
<dbReference type="KEGG" id="ecc:c4464"/>
<dbReference type="eggNOG" id="COG0756">
    <property type="taxonomic scope" value="Bacteria"/>
</dbReference>
<dbReference type="HOGENOM" id="CLU_068508_1_1_6"/>
<dbReference type="UniPathway" id="UPA00610">
    <property type="reaction ID" value="UER00666"/>
</dbReference>
<dbReference type="Proteomes" id="UP000001410">
    <property type="component" value="Chromosome"/>
</dbReference>
<dbReference type="GO" id="GO:0004170">
    <property type="term" value="F:dUTP diphosphatase activity"/>
    <property type="evidence" value="ECO:0007669"/>
    <property type="project" value="UniProtKB-UniRule"/>
</dbReference>
<dbReference type="GO" id="GO:0000287">
    <property type="term" value="F:magnesium ion binding"/>
    <property type="evidence" value="ECO:0007669"/>
    <property type="project" value="UniProtKB-UniRule"/>
</dbReference>
<dbReference type="GO" id="GO:0006226">
    <property type="term" value="P:dUMP biosynthetic process"/>
    <property type="evidence" value="ECO:0007669"/>
    <property type="project" value="UniProtKB-UniRule"/>
</dbReference>
<dbReference type="GO" id="GO:0046081">
    <property type="term" value="P:dUTP catabolic process"/>
    <property type="evidence" value="ECO:0007669"/>
    <property type="project" value="InterPro"/>
</dbReference>
<dbReference type="CDD" id="cd07557">
    <property type="entry name" value="trimeric_dUTPase"/>
    <property type="match status" value="1"/>
</dbReference>
<dbReference type="FunFam" id="2.70.40.10:FF:000002">
    <property type="entry name" value="dUTP diphosphatase"/>
    <property type="match status" value="1"/>
</dbReference>
<dbReference type="Gene3D" id="2.70.40.10">
    <property type="match status" value="1"/>
</dbReference>
<dbReference type="HAMAP" id="MF_00116">
    <property type="entry name" value="dUTPase_bact"/>
    <property type="match status" value="1"/>
</dbReference>
<dbReference type="InterPro" id="IPR008181">
    <property type="entry name" value="dUTPase"/>
</dbReference>
<dbReference type="InterPro" id="IPR029054">
    <property type="entry name" value="dUTPase-like"/>
</dbReference>
<dbReference type="InterPro" id="IPR036157">
    <property type="entry name" value="dUTPase-like_sf"/>
</dbReference>
<dbReference type="InterPro" id="IPR033704">
    <property type="entry name" value="dUTPase_trimeric"/>
</dbReference>
<dbReference type="NCBIfam" id="TIGR00576">
    <property type="entry name" value="dut"/>
    <property type="match status" value="1"/>
</dbReference>
<dbReference type="NCBIfam" id="NF001862">
    <property type="entry name" value="PRK00601.1"/>
    <property type="match status" value="1"/>
</dbReference>
<dbReference type="PANTHER" id="PTHR11241">
    <property type="entry name" value="DEOXYURIDINE 5'-TRIPHOSPHATE NUCLEOTIDOHYDROLASE"/>
    <property type="match status" value="1"/>
</dbReference>
<dbReference type="PANTHER" id="PTHR11241:SF0">
    <property type="entry name" value="DEOXYURIDINE 5'-TRIPHOSPHATE NUCLEOTIDOHYDROLASE"/>
    <property type="match status" value="1"/>
</dbReference>
<dbReference type="Pfam" id="PF00692">
    <property type="entry name" value="dUTPase"/>
    <property type="match status" value="1"/>
</dbReference>
<dbReference type="SUPFAM" id="SSF51283">
    <property type="entry name" value="dUTPase-like"/>
    <property type="match status" value="1"/>
</dbReference>
<comment type="function">
    <text evidence="1">This enzyme is involved in nucleotide metabolism: it produces dUMP, the immediate precursor of thymidine nucleotides and it decreases the intracellular concentration of dUTP so that uracil cannot be incorporated into DNA.</text>
</comment>
<comment type="catalytic activity">
    <reaction evidence="1">
        <text>dUTP + H2O = dUMP + diphosphate + H(+)</text>
        <dbReference type="Rhea" id="RHEA:10248"/>
        <dbReference type="ChEBI" id="CHEBI:15377"/>
        <dbReference type="ChEBI" id="CHEBI:15378"/>
        <dbReference type="ChEBI" id="CHEBI:33019"/>
        <dbReference type="ChEBI" id="CHEBI:61555"/>
        <dbReference type="ChEBI" id="CHEBI:246422"/>
        <dbReference type="EC" id="3.6.1.23"/>
    </reaction>
</comment>
<comment type="cofactor">
    <cofactor evidence="1">
        <name>Mg(2+)</name>
        <dbReference type="ChEBI" id="CHEBI:18420"/>
    </cofactor>
</comment>
<comment type="pathway">
    <text evidence="1">Pyrimidine metabolism; dUMP biosynthesis; dUMP from dCTP (dUTP route): step 2/2.</text>
</comment>
<comment type="subunit">
    <text evidence="1">Homotrimer.</text>
</comment>
<comment type="similarity">
    <text evidence="1">Belongs to the dUTPase family.</text>
</comment>
<comment type="sequence caution" evidence="2">
    <conflict type="erroneous initiation">
        <sequence resource="EMBL-CDS" id="AAN82900"/>
    </conflict>
</comment>
<protein>
    <recommendedName>
        <fullName evidence="1">Deoxyuridine 5'-triphosphate nucleotidohydrolase</fullName>
        <shortName evidence="1">dUTPase</shortName>
        <ecNumber evidence="1">3.6.1.23</ecNumber>
    </recommendedName>
    <alternativeName>
        <fullName evidence="1">dUTP pyrophosphatase</fullName>
    </alternativeName>
</protein>
<name>DUT_ECOL6</name>
<gene>
    <name evidence="1" type="primary">dut</name>
    <name type="ordered locus">c4464</name>
</gene>
<organism>
    <name type="scientific">Escherichia coli O6:H1 (strain CFT073 / ATCC 700928 / UPEC)</name>
    <dbReference type="NCBI Taxonomy" id="199310"/>
    <lineage>
        <taxon>Bacteria</taxon>
        <taxon>Pseudomonadati</taxon>
        <taxon>Pseudomonadota</taxon>
        <taxon>Gammaproteobacteria</taxon>
        <taxon>Enterobacterales</taxon>
        <taxon>Enterobacteriaceae</taxon>
        <taxon>Escherichia</taxon>
    </lineage>
</organism>
<evidence type="ECO:0000255" key="1">
    <source>
        <dbReference type="HAMAP-Rule" id="MF_00116"/>
    </source>
</evidence>
<evidence type="ECO:0000305" key="2"/>
<keyword id="KW-0378">Hydrolase</keyword>
<keyword id="KW-0460">Magnesium</keyword>
<keyword id="KW-0479">Metal-binding</keyword>
<keyword id="KW-0546">Nucleotide metabolism</keyword>
<keyword id="KW-1185">Reference proteome</keyword>